<comment type="function">
    <text evidence="2 4">The N-terminal section of a specificity (S) subunit of a type I methyltransferase (MTase); this subunit dictates DNA sequence specificity. The single R subunit has multiple frameshifts and is probably not expressed.</text>
</comment>
<comment type="subunit">
    <text evidence="1">The methyltransferase is composed of M and S polypeptides.</text>
</comment>
<comment type="domain">
    <text evidence="1">Contains two DNA recognition domains, each specifying recognition of one of the two defined components of the target sequence.</text>
</comment>
<comment type="similarity">
    <text evidence="3">Belongs to the type-I restriction system S methylase family.</text>
</comment>
<name>T1SZ_MYCPN</name>
<dbReference type="EMBL" id="U00089">
    <property type="protein sequence ID" value="AAB96194.1"/>
    <property type="molecule type" value="Genomic_DNA"/>
</dbReference>
<dbReference type="PIR" id="S73872">
    <property type="entry name" value="S73872"/>
</dbReference>
<dbReference type="RefSeq" id="NP_109977.1">
    <property type="nucleotide sequence ID" value="NC_000912.1"/>
</dbReference>
<dbReference type="RefSeq" id="WP_010874646.1">
    <property type="nucleotide sequence ID" value="NC_000912.1"/>
</dbReference>
<dbReference type="SMR" id="P75488"/>
<dbReference type="IntAct" id="P75488">
    <property type="interactions" value="1"/>
</dbReference>
<dbReference type="STRING" id="272634.MPN_289"/>
<dbReference type="REBASE" id="6702">
    <property type="entry name" value="S.MpnORF289P"/>
</dbReference>
<dbReference type="EnsemblBacteria" id="AAB96194">
    <property type="protein sequence ID" value="AAB96194"/>
    <property type="gene ID" value="MPN_289"/>
</dbReference>
<dbReference type="KEGG" id="mpn:MPN_289"/>
<dbReference type="PATRIC" id="fig|272634.6.peg.313"/>
<dbReference type="HOGENOM" id="CLU_021095_6_2_14"/>
<dbReference type="OrthoDB" id="396674at2"/>
<dbReference type="BioCyc" id="MPNE272634:G1GJ3-456-MONOMER"/>
<dbReference type="PRO" id="PR:P75488"/>
<dbReference type="Proteomes" id="UP000000808">
    <property type="component" value="Chromosome"/>
</dbReference>
<dbReference type="GO" id="GO:0003677">
    <property type="term" value="F:DNA binding"/>
    <property type="evidence" value="ECO:0007669"/>
    <property type="project" value="UniProtKB-KW"/>
</dbReference>
<dbReference type="GO" id="GO:0009307">
    <property type="term" value="P:DNA restriction-modification system"/>
    <property type="evidence" value="ECO:0007669"/>
    <property type="project" value="UniProtKB-KW"/>
</dbReference>
<dbReference type="CDD" id="cd17255">
    <property type="entry name" value="RMtype1_S_Fco49512ORF2615P-TRD2-CR2_like"/>
    <property type="match status" value="1"/>
</dbReference>
<dbReference type="Gene3D" id="3.90.220.20">
    <property type="entry name" value="DNA methylase specificity domains"/>
    <property type="match status" value="1"/>
</dbReference>
<dbReference type="InterPro" id="IPR000055">
    <property type="entry name" value="Restrct_endonuc_typeI_TRD"/>
</dbReference>
<dbReference type="InterPro" id="IPR044946">
    <property type="entry name" value="Restrct_endonuc_typeI_TRD_sf"/>
</dbReference>
<dbReference type="InterPro" id="IPR052021">
    <property type="entry name" value="Type-I_RS_S_subunit"/>
</dbReference>
<dbReference type="PANTHER" id="PTHR30408:SF13">
    <property type="entry name" value="TYPE I RESTRICTION ENZYME HINDI SPECIFICITY SUBUNIT"/>
    <property type="match status" value="1"/>
</dbReference>
<dbReference type="PANTHER" id="PTHR30408">
    <property type="entry name" value="TYPE-1 RESTRICTION ENZYME ECOKI SPECIFICITY PROTEIN"/>
    <property type="match status" value="1"/>
</dbReference>
<dbReference type="Pfam" id="PF01420">
    <property type="entry name" value="Methylase_S"/>
    <property type="match status" value="1"/>
</dbReference>
<dbReference type="SUPFAM" id="SSF116734">
    <property type="entry name" value="DNA methylase specificity domain"/>
    <property type="match status" value="1"/>
</dbReference>
<feature type="chain" id="PRO_0000198049" description="Putative type I specificity subunit S.MpnORF289P N-terminus">
    <location>
        <begin position="1"/>
        <end position="187"/>
    </location>
</feature>
<keyword id="KW-0238">DNA-binding</keyword>
<keyword id="KW-1185">Reference proteome</keyword>
<keyword id="KW-0680">Restriction system</keyword>
<accession>P75488</accession>
<evidence type="ECO:0000250" key="1">
    <source>
        <dbReference type="UniProtKB" id="P05719"/>
    </source>
</evidence>
<evidence type="ECO:0000303" key="2">
    <source>
    </source>
</evidence>
<evidence type="ECO:0000305" key="3"/>
<evidence type="ECO:0000305" key="4">
    <source>
    </source>
</evidence>
<organism>
    <name type="scientific">Mycoplasma pneumoniae (strain ATCC 29342 / M129 / Subtype 1)</name>
    <name type="common">Mycoplasmoides pneumoniae</name>
    <dbReference type="NCBI Taxonomy" id="272634"/>
    <lineage>
        <taxon>Bacteria</taxon>
        <taxon>Bacillati</taxon>
        <taxon>Mycoplasmatota</taxon>
        <taxon>Mycoplasmoidales</taxon>
        <taxon>Mycoplasmoidaceae</taxon>
        <taxon>Mycoplasmoides</taxon>
    </lineage>
</organism>
<proteinExistence type="inferred from homology"/>
<gene>
    <name type="ordered locus">MPN_289</name>
    <name type="ORF">H10_orf187V</name>
    <name type="ORF">MP546</name>
</gene>
<protein>
    <recommendedName>
        <fullName evidence="2">Putative type I specificity subunit S.MpnORF289P N-terminus</fullName>
        <shortName>S protein</shortName>
        <shortName evidence="2">S.MpnORF289P N-terminus</shortName>
    </recommendedName>
    <alternativeName>
        <fullName>Putative type-1 specificity subunit MPN_289</fullName>
    </alternativeName>
    <alternativeName>
        <fullName>S.MpnORFEBP</fullName>
    </alternativeName>
</protein>
<reference key="1">
    <citation type="journal article" date="1996" name="Nucleic Acids Res.">
        <title>Complete sequence analysis of the genome of the bacterium Mycoplasma pneumoniae.</title>
        <authorList>
            <person name="Himmelreich R."/>
            <person name="Hilbert H."/>
            <person name="Plagens H."/>
            <person name="Pirkl E."/>
            <person name="Li B.-C."/>
            <person name="Herrmann R."/>
        </authorList>
    </citation>
    <scope>NUCLEOTIDE SEQUENCE [LARGE SCALE GENOMIC DNA]</scope>
    <source>
        <strain>ATCC 29342 / M129 / Subtype 1</strain>
    </source>
</reference>
<reference key="2">
    <citation type="journal article" date="2003" name="Nucleic Acids Res.">
        <title>A nomenclature for restriction enzymes, DNA methyltransferases, homing endonucleases and their genes.</title>
        <authorList>
            <person name="Roberts R.J."/>
            <person name="Belfort M."/>
            <person name="Bestor T."/>
            <person name="Bhagwat A.S."/>
            <person name="Bickle T.A."/>
            <person name="Bitinaite J."/>
            <person name="Blumenthal R.M."/>
            <person name="Degtyarev S.K."/>
            <person name="Dryden D.T."/>
            <person name="Dybvig K."/>
            <person name="Firman K."/>
            <person name="Gromova E.S."/>
            <person name="Gumport R.I."/>
            <person name="Halford S.E."/>
            <person name="Hattman S."/>
            <person name="Heitman J."/>
            <person name="Hornby D.P."/>
            <person name="Janulaitis A."/>
            <person name="Jeltsch A."/>
            <person name="Josephsen J."/>
            <person name="Kiss A."/>
            <person name="Klaenhammer T.R."/>
            <person name="Kobayashi I."/>
            <person name="Kong H."/>
            <person name="Krueger D.H."/>
            <person name="Lacks S."/>
            <person name="Marinus M.G."/>
            <person name="Miyahara M."/>
            <person name="Morgan R.D."/>
            <person name="Murray N.E."/>
            <person name="Nagaraja V."/>
            <person name="Piekarowicz A."/>
            <person name="Pingoud A."/>
            <person name="Raleigh E."/>
            <person name="Rao D.N."/>
            <person name="Reich N."/>
            <person name="Repin V.E."/>
            <person name="Selker E.U."/>
            <person name="Shaw P.C."/>
            <person name="Stein D.C."/>
            <person name="Stoddard B.L."/>
            <person name="Szybalski W."/>
            <person name="Trautner T.A."/>
            <person name="Van Etten J.L."/>
            <person name="Vitor J.M."/>
            <person name="Wilson G.G."/>
            <person name="Xu S.Y."/>
        </authorList>
    </citation>
    <scope>NOMENCLATURE</scope>
</reference>
<sequence length="187" mass="21289">MQIKTYKIKDICDIKRGRVISKLYIKNNPGEFPVYSSATVNNGEIGRIKDCDLKGEYVTWTTDGAQAGSVFYRNGQFNATNVCGILKVNNDEIYPKFLAYALRLKAPKFVNYACPIPKLMQGTLAEIELDFTSKKIQEKIATILDTFTELSAELSAELSAELSAELRERKKQYVFYSDYLLNPKNWK</sequence>